<comment type="function">
    <text evidence="1">Substrate-specific adapter of a BCR (BTB-CUL3-RBX1) E3 ubiquitin ligase complex involved in various processes, such as translation homeostasis and lipid synthesis. The BCR(KLHL25) ubiquitin ligase complex acts by mediating ubiquitination of hypophosphorylated eif4ebp1 (4E-BP1): ubiquitination and subsequent degradation of hypophosphorylated EIF4EBP1 (4E-BP1) probably serves as a homeostatic mechanism to maintain translation and prevent eIF4E inhibition when eIF4E levels are low. The BCR(KLHL25) complex also acts as a regulator of lipid synthesis by mediating ubiquitination and degradation of ACLY, thereby inhibiting lipid synthesis.</text>
</comment>
<comment type="pathway">
    <text evidence="1">Protein modification; protein ubiquitination.</text>
</comment>
<comment type="subunit">
    <text evidence="1">Component of the BCR(KLHL25) E3 ubiquitin ligase complex, at least composed of cul3, klhl25 and rbx1.</text>
</comment>
<gene>
    <name evidence="1" type="primary">klhl25</name>
</gene>
<proteinExistence type="evidence at transcript level"/>
<name>KLH25_XENLA</name>
<reference key="1">
    <citation type="submission" date="2004-07" db="EMBL/GenBank/DDBJ databases">
        <authorList>
            <consortium name="NIH - Xenopus Gene Collection (XGC) project"/>
        </authorList>
    </citation>
    <scope>NUCLEOTIDE SEQUENCE [LARGE SCALE MRNA]</scope>
    <source>
        <tissue>Oocyte</tissue>
    </source>
</reference>
<accession>Q6DFF7</accession>
<sequence>MSVSVHENRKSRTSTGSMNISLYHKLSHSECVLNHLNTMRKQRLFTDMTLWAGNRSFPCHRAVLAACSPYFEAMFSNGLRESLDNTVNFHNSLHPEVLELLLDFAYSSKIIINEENAESLLEAGDMLQFHDVRDAACEFLEKNLYPSNCLGMMILSDAHQCQRLYELSLRMCLSNFATLHNTEDFSSLSKDMLLDLISSDELEIEDEQVVFNAVLHWVKEDLDKRKDYFPELLRNVRLALLPSELLKEAVVCEDLIIADERSKLIMDEAVQCKKKILQNDGVVTSLCAKPRKAGHTLLILGGQTFMCDKIYQLDHKAKEIIPKADLPSPRKEFSACAIGCKVYITGGRGSENGVSKDVWVYDTIHEEWSKSAPMLIARFGHGSAELDNCLYVVGGHTAVAGVFPASPSVSLKQVEKYDPLPNKWTMMAPLRDGVSNAAVVSAKLKLFVFGGTSIHRDRVSKVQFYDPHENRWSIKAECPQPWRYTAAAVLGSQIFIMGGDTEFTAASAYRFDCETNLWTRIGDMTAKRMSCHALASGNKVYVVGGYFGTQRCKTLDCYDPTSDSWNSITSVPYSLIPTAFVSTWKHLPA</sequence>
<organism>
    <name type="scientific">Xenopus laevis</name>
    <name type="common">African clawed frog</name>
    <dbReference type="NCBI Taxonomy" id="8355"/>
    <lineage>
        <taxon>Eukaryota</taxon>
        <taxon>Metazoa</taxon>
        <taxon>Chordata</taxon>
        <taxon>Craniata</taxon>
        <taxon>Vertebrata</taxon>
        <taxon>Euteleostomi</taxon>
        <taxon>Amphibia</taxon>
        <taxon>Batrachia</taxon>
        <taxon>Anura</taxon>
        <taxon>Pipoidea</taxon>
        <taxon>Pipidae</taxon>
        <taxon>Xenopodinae</taxon>
        <taxon>Xenopus</taxon>
        <taxon>Xenopus</taxon>
    </lineage>
</organism>
<protein>
    <recommendedName>
        <fullName evidence="3">Kelch-like protein 25</fullName>
    </recommendedName>
</protein>
<dbReference type="EMBL" id="BC076781">
    <property type="protein sequence ID" value="AAH76781.1"/>
    <property type="molecule type" value="mRNA"/>
</dbReference>
<dbReference type="RefSeq" id="NP_001082572.1">
    <property type="nucleotide sequence ID" value="NM_001089103.1"/>
</dbReference>
<dbReference type="SMR" id="Q6DFF7"/>
<dbReference type="DNASU" id="398575"/>
<dbReference type="GeneID" id="398575"/>
<dbReference type="KEGG" id="xla:398575"/>
<dbReference type="AGR" id="Xenbase:XB-GENE-964642"/>
<dbReference type="CTD" id="398575"/>
<dbReference type="Xenbase" id="XB-GENE-964642">
    <property type="gene designation" value="klhl25.L"/>
</dbReference>
<dbReference type="OMA" id="ACEELIM"/>
<dbReference type="OrthoDB" id="6359816at2759"/>
<dbReference type="UniPathway" id="UPA00143"/>
<dbReference type="Proteomes" id="UP000186698">
    <property type="component" value="Chromosome 3L"/>
</dbReference>
<dbReference type="Bgee" id="398575">
    <property type="expression patterns" value="Expressed in testis and 17 other cell types or tissues"/>
</dbReference>
<dbReference type="GO" id="GO:0031463">
    <property type="term" value="C:Cul3-RING ubiquitin ligase complex"/>
    <property type="evidence" value="ECO:0000250"/>
    <property type="project" value="UniProtKB"/>
</dbReference>
<dbReference type="GO" id="GO:0005737">
    <property type="term" value="C:cytoplasm"/>
    <property type="evidence" value="ECO:0000318"/>
    <property type="project" value="GO_Central"/>
</dbReference>
<dbReference type="GO" id="GO:1990756">
    <property type="term" value="F:ubiquitin-like ligase-substrate adaptor activity"/>
    <property type="evidence" value="ECO:0000250"/>
    <property type="project" value="UniProtKB"/>
</dbReference>
<dbReference type="GO" id="GO:0032831">
    <property type="term" value="P:positive regulation of CD4-positive, CD25-positive, alpha-beta regulatory T cell differentiation"/>
    <property type="evidence" value="ECO:0000250"/>
    <property type="project" value="UniProtKB"/>
</dbReference>
<dbReference type="GO" id="GO:0046321">
    <property type="term" value="P:positive regulation of fatty acid oxidation"/>
    <property type="evidence" value="ECO:0000250"/>
    <property type="project" value="UniProtKB"/>
</dbReference>
<dbReference type="GO" id="GO:0043161">
    <property type="term" value="P:proteasome-mediated ubiquitin-dependent protein catabolic process"/>
    <property type="evidence" value="ECO:0000318"/>
    <property type="project" value="GO_Central"/>
</dbReference>
<dbReference type="GO" id="GO:0016567">
    <property type="term" value="P:protein ubiquitination"/>
    <property type="evidence" value="ECO:0000250"/>
    <property type="project" value="UniProtKB"/>
</dbReference>
<dbReference type="GO" id="GO:0006446">
    <property type="term" value="P:regulation of translational initiation"/>
    <property type="evidence" value="ECO:0000250"/>
    <property type="project" value="UniProtKB"/>
</dbReference>
<dbReference type="GO" id="GO:0006511">
    <property type="term" value="P:ubiquitin-dependent protein catabolic process"/>
    <property type="evidence" value="ECO:0000250"/>
    <property type="project" value="UniProtKB"/>
</dbReference>
<dbReference type="CDD" id="cd18254">
    <property type="entry name" value="BTB_POZ_KLHL25"/>
    <property type="match status" value="1"/>
</dbReference>
<dbReference type="FunFam" id="2.120.10.80:FF:000003">
    <property type="entry name" value="Ectoderm-neural cortex protein 1"/>
    <property type="match status" value="1"/>
</dbReference>
<dbReference type="FunFam" id="2.120.10.80:FF:000004">
    <property type="entry name" value="Ectoderm-neural cortex protein 1"/>
    <property type="match status" value="1"/>
</dbReference>
<dbReference type="FunFam" id="3.30.710.10:FF:000023">
    <property type="entry name" value="Ectoderm-neural cortex protein 1"/>
    <property type="match status" value="1"/>
</dbReference>
<dbReference type="FunFam" id="1.25.40.420:FF:000001">
    <property type="entry name" value="Kelch-like family member 12"/>
    <property type="match status" value="1"/>
</dbReference>
<dbReference type="Gene3D" id="1.25.40.420">
    <property type="match status" value="1"/>
</dbReference>
<dbReference type="Gene3D" id="2.120.10.80">
    <property type="entry name" value="Kelch-type beta propeller"/>
    <property type="match status" value="2"/>
</dbReference>
<dbReference type="Gene3D" id="3.30.710.10">
    <property type="entry name" value="Potassium Channel Kv1.1, Chain A"/>
    <property type="match status" value="1"/>
</dbReference>
<dbReference type="InterPro" id="IPR011705">
    <property type="entry name" value="BACK"/>
</dbReference>
<dbReference type="InterPro" id="IPR017096">
    <property type="entry name" value="BTB-kelch_protein"/>
</dbReference>
<dbReference type="InterPro" id="IPR000210">
    <property type="entry name" value="BTB/POZ_dom"/>
</dbReference>
<dbReference type="InterPro" id="IPR015915">
    <property type="entry name" value="Kelch-typ_b-propeller"/>
</dbReference>
<dbReference type="InterPro" id="IPR006652">
    <property type="entry name" value="Kelch_1"/>
</dbReference>
<dbReference type="InterPro" id="IPR030565">
    <property type="entry name" value="KLHL25_BTB_POZ_dom"/>
</dbReference>
<dbReference type="InterPro" id="IPR011333">
    <property type="entry name" value="SKP1/BTB/POZ_sf"/>
</dbReference>
<dbReference type="PANTHER" id="PTHR24412">
    <property type="entry name" value="KELCH PROTEIN"/>
    <property type="match status" value="1"/>
</dbReference>
<dbReference type="PANTHER" id="PTHR24412:SF487">
    <property type="entry name" value="KELCH-LIKE PROTEIN 25"/>
    <property type="match status" value="1"/>
</dbReference>
<dbReference type="Pfam" id="PF07707">
    <property type="entry name" value="BACK"/>
    <property type="match status" value="1"/>
</dbReference>
<dbReference type="Pfam" id="PF00651">
    <property type="entry name" value="BTB"/>
    <property type="match status" value="1"/>
</dbReference>
<dbReference type="Pfam" id="PF01344">
    <property type="entry name" value="Kelch_1"/>
    <property type="match status" value="1"/>
</dbReference>
<dbReference type="Pfam" id="PF24681">
    <property type="entry name" value="Kelch_KLHDC2_KLHL20_DRC7"/>
    <property type="match status" value="1"/>
</dbReference>
<dbReference type="PIRSF" id="PIRSF037037">
    <property type="entry name" value="Kelch-like_protein_gigaxonin"/>
    <property type="match status" value="1"/>
</dbReference>
<dbReference type="SMART" id="SM00875">
    <property type="entry name" value="BACK"/>
    <property type="match status" value="1"/>
</dbReference>
<dbReference type="SMART" id="SM00225">
    <property type="entry name" value="BTB"/>
    <property type="match status" value="1"/>
</dbReference>
<dbReference type="SMART" id="SM00612">
    <property type="entry name" value="Kelch"/>
    <property type="match status" value="6"/>
</dbReference>
<dbReference type="SUPFAM" id="SSF117281">
    <property type="entry name" value="Kelch motif"/>
    <property type="match status" value="1"/>
</dbReference>
<dbReference type="SUPFAM" id="SSF54695">
    <property type="entry name" value="POZ domain"/>
    <property type="match status" value="1"/>
</dbReference>
<dbReference type="PROSITE" id="PS50097">
    <property type="entry name" value="BTB"/>
    <property type="match status" value="1"/>
</dbReference>
<feature type="chain" id="PRO_0000272311" description="Kelch-like protein 25">
    <location>
        <begin position="1"/>
        <end position="589"/>
    </location>
</feature>
<feature type="domain" description="BTB" evidence="2">
    <location>
        <begin position="46"/>
        <end position="114"/>
    </location>
</feature>
<feature type="domain" description="BACK">
    <location>
        <begin position="149"/>
        <end position="250"/>
    </location>
</feature>
<feature type="repeat" description="Kelch 1">
    <location>
        <begin position="296"/>
        <end position="340"/>
    </location>
</feature>
<feature type="repeat" description="Kelch 2">
    <location>
        <begin position="341"/>
        <end position="388"/>
    </location>
</feature>
<feature type="repeat" description="Kelch 3">
    <location>
        <begin position="389"/>
        <end position="444"/>
    </location>
</feature>
<feature type="repeat" description="Kelch 4">
    <location>
        <begin position="446"/>
        <end position="492"/>
    </location>
</feature>
<feature type="repeat" description="Kelch 5">
    <location>
        <begin position="494"/>
        <end position="538"/>
    </location>
</feature>
<feature type="repeat" description="Kelch 6">
    <location>
        <begin position="539"/>
        <end position="585"/>
    </location>
</feature>
<evidence type="ECO:0000250" key="1">
    <source>
        <dbReference type="UniProtKB" id="Q9H0H3"/>
    </source>
</evidence>
<evidence type="ECO:0000255" key="2">
    <source>
        <dbReference type="PROSITE-ProRule" id="PRU00037"/>
    </source>
</evidence>
<evidence type="ECO:0000305" key="3"/>
<keyword id="KW-0880">Kelch repeat</keyword>
<keyword id="KW-1185">Reference proteome</keyword>
<keyword id="KW-0677">Repeat</keyword>
<keyword id="KW-0810">Translation regulation</keyword>
<keyword id="KW-0833">Ubl conjugation pathway</keyword>